<gene>
    <name evidence="1" type="primary">pheT</name>
    <name type="ordered locus">PA2739</name>
</gene>
<reference key="1">
    <citation type="journal article" date="2000" name="Nature">
        <title>Complete genome sequence of Pseudomonas aeruginosa PAO1, an opportunistic pathogen.</title>
        <authorList>
            <person name="Stover C.K."/>
            <person name="Pham X.-Q.T."/>
            <person name="Erwin A.L."/>
            <person name="Mizoguchi S.D."/>
            <person name="Warrener P."/>
            <person name="Hickey M.J."/>
            <person name="Brinkman F.S.L."/>
            <person name="Hufnagle W.O."/>
            <person name="Kowalik D.J."/>
            <person name="Lagrou M."/>
            <person name="Garber R.L."/>
            <person name="Goltry L."/>
            <person name="Tolentino E."/>
            <person name="Westbrock-Wadman S."/>
            <person name="Yuan Y."/>
            <person name="Brody L.L."/>
            <person name="Coulter S.N."/>
            <person name="Folger K.R."/>
            <person name="Kas A."/>
            <person name="Larbig K."/>
            <person name="Lim R.M."/>
            <person name="Smith K.A."/>
            <person name="Spencer D.H."/>
            <person name="Wong G.K.-S."/>
            <person name="Wu Z."/>
            <person name="Paulsen I.T."/>
            <person name="Reizer J."/>
            <person name="Saier M.H. Jr."/>
            <person name="Hancock R.E.W."/>
            <person name="Lory S."/>
            <person name="Olson M.V."/>
        </authorList>
    </citation>
    <scope>NUCLEOTIDE SEQUENCE [LARGE SCALE GENOMIC DNA]</scope>
    <source>
        <strain>ATCC 15692 / DSM 22644 / CIP 104116 / JCM 14847 / LMG 12228 / 1C / PRS 101 / PAO1</strain>
    </source>
</reference>
<keyword id="KW-0002">3D-structure</keyword>
<keyword id="KW-0030">Aminoacyl-tRNA synthetase</keyword>
<keyword id="KW-0067">ATP-binding</keyword>
<keyword id="KW-0963">Cytoplasm</keyword>
<keyword id="KW-0436">Ligase</keyword>
<keyword id="KW-0460">Magnesium</keyword>
<keyword id="KW-0479">Metal-binding</keyword>
<keyword id="KW-0547">Nucleotide-binding</keyword>
<keyword id="KW-0648">Protein biosynthesis</keyword>
<keyword id="KW-1185">Reference proteome</keyword>
<keyword id="KW-0694">RNA-binding</keyword>
<keyword id="KW-0820">tRNA-binding</keyword>
<sequence length="792" mass="86800">MKFSEKWLRSWANPQVSHDELVARLSMVGLEVDADLPVAGAFSGVVVGEVLSTEQHPDADKLRVCQVSNGSETFQVVCGAPNVRAGLKIPFAMIGAELPDDFKIKKAKLRGVESFGMLCSAKELQISEENAGLLELPADAPVGQDVRTYLELADYTIEVGLTPNRGDCLSLAGLAREVSAIYDVPLAPVAVDAVAAQHDETRPVELAAPAACPRYLGRVIRNVDLSRPTPLWMVERLRRSDIRSIDPVVDVTNYVMIELGQPMHAFDLAEINGGVRVRMAEDGEKLVLLDGQEITLRADTLVIADHQRALAIAGVMGGEHSGVSDSTRDLFLEAAFFDTIALAGKARSYGLHTDSSHRFERGVDSQLARKAMERATRLILDIVGGEPGPIVEQVSEAHLPKVAPITLRAERVTQMLGMPLDAAEIVRLLQALELTVVADGEGQWSVGVPSHRFDISLEVDLIEELARLYGYNRLPVRYPQARLAPNNKPEARAALPLLRRLLVARGYQEAITFSFIDPALFELFDPGTQPLTLANPISADMAAMRSSLWPGLVKALQHNLNRQQSRVRLFESGLRFVGQLEGLKQEAMLAGAICGKRLPEGWANGRDGVDFFDAKADVEAVLASAGALGDFSFVPGEHPALHPGQTARIEREGRLVGYLGALHPELAKKLDLEQPVFLFELLLAEVVDGHLPKFRELSRFPEVRRDLALLVDQDVPAQDILTQIRAAAGEWLTDLRLFDVYHGKGIDPHRKSLAVGLTWQHPSRTLNDDEVNSTTQNIVTSLEERFNATLRK</sequence>
<evidence type="ECO:0000255" key="1">
    <source>
        <dbReference type="HAMAP-Rule" id="MF_00283"/>
    </source>
</evidence>
<evidence type="ECO:0007829" key="2">
    <source>
        <dbReference type="PDB" id="4P72"/>
    </source>
</evidence>
<evidence type="ECO:0007829" key="3">
    <source>
        <dbReference type="PDB" id="4P73"/>
    </source>
</evidence>
<evidence type="ECO:0007829" key="4">
    <source>
        <dbReference type="PDB" id="4P74"/>
    </source>
</evidence>
<dbReference type="EC" id="6.1.1.20" evidence="1"/>
<dbReference type="EMBL" id="AE004091">
    <property type="protein sequence ID" value="AAG06127.1"/>
    <property type="molecule type" value="Genomic_DNA"/>
</dbReference>
<dbReference type="PIR" id="A83303">
    <property type="entry name" value="A83303"/>
</dbReference>
<dbReference type="RefSeq" id="NP_251429.1">
    <property type="nucleotide sequence ID" value="NC_002516.2"/>
</dbReference>
<dbReference type="RefSeq" id="WP_003114408.1">
    <property type="nucleotide sequence ID" value="NZ_QZGE01000011.1"/>
</dbReference>
<dbReference type="PDB" id="4P71">
    <property type="method" value="X-ray"/>
    <property type="resolution" value="2.79 A"/>
    <property type="chains" value="A/B=1-792"/>
</dbReference>
<dbReference type="PDB" id="4P72">
    <property type="method" value="X-ray"/>
    <property type="resolution" value="2.62 A"/>
    <property type="chains" value="A/B=1-792"/>
</dbReference>
<dbReference type="PDB" id="4P73">
    <property type="method" value="X-ray"/>
    <property type="resolution" value="3.03 A"/>
    <property type="chains" value="A/B=1-792"/>
</dbReference>
<dbReference type="PDB" id="4P74">
    <property type="method" value="X-ray"/>
    <property type="resolution" value="2.70 A"/>
    <property type="chains" value="A/B=1-792"/>
</dbReference>
<dbReference type="PDB" id="4P75">
    <property type="method" value="X-ray"/>
    <property type="resolution" value="2.96 A"/>
    <property type="chains" value="A/B=1-792"/>
</dbReference>
<dbReference type="PDBsum" id="4P71"/>
<dbReference type="PDBsum" id="4P72"/>
<dbReference type="PDBsum" id="4P73"/>
<dbReference type="PDBsum" id="4P74"/>
<dbReference type="PDBsum" id="4P75"/>
<dbReference type="SMR" id="Q9I0A4"/>
<dbReference type="FunCoup" id="Q9I0A4">
    <property type="interactions" value="568"/>
</dbReference>
<dbReference type="STRING" id="208964.PA2739"/>
<dbReference type="BindingDB" id="Q9I0A4"/>
<dbReference type="PaxDb" id="208964-PA2739"/>
<dbReference type="GeneID" id="882969"/>
<dbReference type="KEGG" id="pae:PA2739"/>
<dbReference type="PATRIC" id="fig|208964.12.peg.2864"/>
<dbReference type="PseudoCAP" id="PA2739"/>
<dbReference type="HOGENOM" id="CLU_016891_0_0_6"/>
<dbReference type="InParanoid" id="Q9I0A4"/>
<dbReference type="OrthoDB" id="9805455at2"/>
<dbReference type="PhylomeDB" id="Q9I0A4"/>
<dbReference type="BioCyc" id="PAER208964:G1FZ6-2778-MONOMER"/>
<dbReference type="EvolutionaryTrace" id="Q9I0A4"/>
<dbReference type="Proteomes" id="UP000002438">
    <property type="component" value="Chromosome"/>
</dbReference>
<dbReference type="GO" id="GO:0009328">
    <property type="term" value="C:phenylalanine-tRNA ligase complex"/>
    <property type="evidence" value="ECO:0000318"/>
    <property type="project" value="GO_Central"/>
</dbReference>
<dbReference type="GO" id="GO:0005524">
    <property type="term" value="F:ATP binding"/>
    <property type="evidence" value="ECO:0007669"/>
    <property type="project" value="UniProtKB-UniRule"/>
</dbReference>
<dbReference type="GO" id="GO:0000287">
    <property type="term" value="F:magnesium ion binding"/>
    <property type="evidence" value="ECO:0007669"/>
    <property type="project" value="UniProtKB-UniRule"/>
</dbReference>
<dbReference type="GO" id="GO:0004826">
    <property type="term" value="F:phenylalanine-tRNA ligase activity"/>
    <property type="evidence" value="ECO:0007669"/>
    <property type="project" value="UniProtKB-UniRule"/>
</dbReference>
<dbReference type="GO" id="GO:0000049">
    <property type="term" value="F:tRNA binding"/>
    <property type="evidence" value="ECO:0007669"/>
    <property type="project" value="UniProtKB-KW"/>
</dbReference>
<dbReference type="GO" id="GO:0006432">
    <property type="term" value="P:phenylalanyl-tRNA aminoacylation"/>
    <property type="evidence" value="ECO:0000318"/>
    <property type="project" value="GO_Central"/>
</dbReference>
<dbReference type="CDD" id="cd00769">
    <property type="entry name" value="PheRS_beta_core"/>
    <property type="match status" value="1"/>
</dbReference>
<dbReference type="CDD" id="cd02796">
    <property type="entry name" value="tRNA_bind_bactPheRS"/>
    <property type="match status" value="1"/>
</dbReference>
<dbReference type="FunFam" id="2.40.50.140:FF:000045">
    <property type="entry name" value="Phenylalanine--tRNA ligase beta subunit"/>
    <property type="match status" value="1"/>
</dbReference>
<dbReference type="FunFam" id="3.30.56.10:FF:000002">
    <property type="entry name" value="Phenylalanine--tRNA ligase beta subunit"/>
    <property type="match status" value="1"/>
</dbReference>
<dbReference type="FunFam" id="3.30.70.380:FF:000001">
    <property type="entry name" value="Phenylalanine--tRNA ligase beta subunit"/>
    <property type="match status" value="1"/>
</dbReference>
<dbReference type="FunFam" id="3.30.930.10:FF:000022">
    <property type="entry name" value="Phenylalanine--tRNA ligase beta subunit"/>
    <property type="match status" value="1"/>
</dbReference>
<dbReference type="FunFam" id="3.50.40.10:FF:000001">
    <property type="entry name" value="Phenylalanine--tRNA ligase beta subunit"/>
    <property type="match status" value="1"/>
</dbReference>
<dbReference type="Gene3D" id="3.30.56.10">
    <property type="match status" value="2"/>
</dbReference>
<dbReference type="Gene3D" id="3.30.930.10">
    <property type="entry name" value="Bira Bifunctional Protein, Domain 2"/>
    <property type="match status" value="1"/>
</dbReference>
<dbReference type="Gene3D" id="3.30.70.380">
    <property type="entry name" value="Ferrodoxin-fold anticodon-binding domain"/>
    <property type="match status" value="1"/>
</dbReference>
<dbReference type="Gene3D" id="2.40.50.140">
    <property type="entry name" value="Nucleic acid-binding proteins"/>
    <property type="match status" value="1"/>
</dbReference>
<dbReference type="Gene3D" id="3.50.40.10">
    <property type="entry name" value="Phenylalanyl-trna Synthetase, Chain B, domain 3"/>
    <property type="match status" value="1"/>
</dbReference>
<dbReference type="HAMAP" id="MF_00283">
    <property type="entry name" value="Phe_tRNA_synth_beta1"/>
    <property type="match status" value="1"/>
</dbReference>
<dbReference type="InterPro" id="IPR045864">
    <property type="entry name" value="aa-tRNA-synth_II/BPL/LPL"/>
</dbReference>
<dbReference type="InterPro" id="IPR005146">
    <property type="entry name" value="B3/B4_tRNA-bd"/>
</dbReference>
<dbReference type="InterPro" id="IPR009061">
    <property type="entry name" value="DNA-bd_dom_put_sf"/>
</dbReference>
<dbReference type="InterPro" id="IPR005121">
    <property type="entry name" value="Fdx_antiC-bd"/>
</dbReference>
<dbReference type="InterPro" id="IPR036690">
    <property type="entry name" value="Fdx_antiC-bd_sf"/>
</dbReference>
<dbReference type="InterPro" id="IPR012340">
    <property type="entry name" value="NA-bd_OB-fold"/>
</dbReference>
<dbReference type="InterPro" id="IPR045060">
    <property type="entry name" value="Phe-tRNA-ligase_IIc_bsu"/>
</dbReference>
<dbReference type="InterPro" id="IPR004532">
    <property type="entry name" value="Phe-tRNA-ligase_IIc_bsu_bact"/>
</dbReference>
<dbReference type="InterPro" id="IPR020825">
    <property type="entry name" value="Phe-tRNA_synthase-like_B3/B4"/>
</dbReference>
<dbReference type="InterPro" id="IPR041616">
    <property type="entry name" value="PheRS_beta_core"/>
</dbReference>
<dbReference type="InterPro" id="IPR002547">
    <property type="entry name" value="tRNA-bd_dom"/>
</dbReference>
<dbReference type="InterPro" id="IPR033714">
    <property type="entry name" value="tRNA_bind_bactPheRS"/>
</dbReference>
<dbReference type="InterPro" id="IPR005147">
    <property type="entry name" value="tRNA_synthase_B5-dom"/>
</dbReference>
<dbReference type="NCBIfam" id="TIGR00472">
    <property type="entry name" value="pheT_bact"/>
    <property type="match status" value="1"/>
</dbReference>
<dbReference type="NCBIfam" id="NF045760">
    <property type="entry name" value="YtpR"/>
    <property type="match status" value="1"/>
</dbReference>
<dbReference type="PANTHER" id="PTHR10947:SF0">
    <property type="entry name" value="PHENYLALANINE--TRNA LIGASE BETA SUBUNIT"/>
    <property type="match status" value="1"/>
</dbReference>
<dbReference type="PANTHER" id="PTHR10947">
    <property type="entry name" value="PHENYLALANYL-TRNA SYNTHETASE BETA CHAIN AND LEUCINE-RICH REPEAT-CONTAINING PROTEIN 47"/>
    <property type="match status" value="1"/>
</dbReference>
<dbReference type="Pfam" id="PF03483">
    <property type="entry name" value="B3_4"/>
    <property type="match status" value="1"/>
</dbReference>
<dbReference type="Pfam" id="PF03484">
    <property type="entry name" value="B5"/>
    <property type="match status" value="1"/>
</dbReference>
<dbReference type="Pfam" id="PF03147">
    <property type="entry name" value="FDX-ACB"/>
    <property type="match status" value="1"/>
</dbReference>
<dbReference type="Pfam" id="PF01588">
    <property type="entry name" value="tRNA_bind"/>
    <property type="match status" value="1"/>
</dbReference>
<dbReference type="Pfam" id="PF17759">
    <property type="entry name" value="tRNA_synthFbeta"/>
    <property type="match status" value="1"/>
</dbReference>
<dbReference type="SMART" id="SM00873">
    <property type="entry name" value="B3_4"/>
    <property type="match status" value="1"/>
</dbReference>
<dbReference type="SMART" id="SM00874">
    <property type="entry name" value="B5"/>
    <property type="match status" value="1"/>
</dbReference>
<dbReference type="SMART" id="SM00896">
    <property type="entry name" value="FDX-ACB"/>
    <property type="match status" value="1"/>
</dbReference>
<dbReference type="SUPFAM" id="SSF54991">
    <property type="entry name" value="Anticodon-binding domain of PheRS"/>
    <property type="match status" value="1"/>
</dbReference>
<dbReference type="SUPFAM" id="SSF55681">
    <property type="entry name" value="Class II aaRS and biotin synthetases"/>
    <property type="match status" value="1"/>
</dbReference>
<dbReference type="SUPFAM" id="SSF50249">
    <property type="entry name" value="Nucleic acid-binding proteins"/>
    <property type="match status" value="1"/>
</dbReference>
<dbReference type="SUPFAM" id="SSF56037">
    <property type="entry name" value="PheT/TilS domain"/>
    <property type="match status" value="1"/>
</dbReference>
<dbReference type="SUPFAM" id="SSF46955">
    <property type="entry name" value="Putative DNA-binding domain"/>
    <property type="match status" value="1"/>
</dbReference>
<dbReference type="PROSITE" id="PS51483">
    <property type="entry name" value="B5"/>
    <property type="match status" value="1"/>
</dbReference>
<dbReference type="PROSITE" id="PS51447">
    <property type="entry name" value="FDX_ACB"/>
    <property type="match status" value="1"/>
</dbReference>
<dbReference type="PROSITE" id="PS50886">
    <property type="entry name" value="TRBD"/>
    <property type="match status" value="1"/>
</dbReference>
<name>SYFB_PSEAE</name>
<comment type="catalytic activity">
    <reaction evidence="1">
        <text>tRNA(Phe) + L-phenylalanine + ATP = L-phenylalanyl-tRNA(Phe) + AMP + diphosphate + H(+)</text>
        <dbReference type="Rhea" id="RHEA:19413"/>
        <dbReference type="Rhea" id="RHEA-COMP:9668"/>
        <dbReference type="Rhea" id="RHEA-COMP:9699"/>
        <dbReference type="ChEBI" id="CHEBI:15378"/>
        <dbReference type="ChEBI" id="CHEBI:30616"/>
        <dbReference type="ChEBI" id="CHEBI:33019"/>
        <dbReference type="ChEBI" id="CHEBI:58095"/>
        <dbReference type="ChEBI" id="CHEBI:78442"/>
        <dbReference type="ChEBI" id="CHEBI:78531"/>
        <dbReference type="ChEBI" id="CHEBI:456215"/>
        <dbReference type="EC" id="6.1.1.20"/>
    </reaction>
</comment>
<comment type="cofactor">
    <cofactor evidence="1">
        <name>Mg(2+)</name>
        <dbReference type="ChEBI" id="CHEBI:18420"/>
    </cofactor>
    <text evidence="1">Binds 2 magnesium ions per tetramer.</text>
</comment>
<comment type="subunit">
    <text evidence="1">Tetramer of two alpha and two beta subunits.</text>
</comment>
<comment type="subcellular location">
    <subcellularLocation>
        <location evidence="1">Cytoplasm</location>
    </subcellularLocation>
</comment>
<comment type="similarity">
    <text evidence="1">Belongs to the phenylalanyl-tRNA synthetase beta subunit family. Type 1 subfamily.</text>
</comment>
<proteinExistence type="evidence at protein level"/>
<organism>
    <name type="scientific">Pseudomonas aeruginosa (strain ATCC 15692 / DSM 22644 / CIP 104116 / JCM 14847 / LMG 12228 / 1C / PRS 101 / PAO1)</name>
    <dbReference type="NCBI Taxonomy" id="208964"/>
    <lineage>
        <taxon>Bacteria</taxon>
        <taxon>Pseudomonadati</taxon>
        <taxon>Pseudomonadota</taxon>
        <taxon>Gammaproteobacteria</taxon>
        <taxon>Pseudomonadales</taxon>
        <taxon>Pseudomonadaceae</taxon>
        <taxon>Pseudomonas</taxon>
    </lineage>
</organism>
<feature type="chain" id="PRO_0000126932" description="Phenylalanine--tRNA ligase beta subunit">
    <location>
        <begin position="1"/>
        <end position="792"/>
    </location>
</feature>
<feature type="domain" description="tRNA-binding" evidence="1">
    <location>
        <begin position="39"/>
        <end position="147"/>
    </location>
</feature>
<feature type="domain" description="B5" evidence="1">
    <location>
        <begin position="400"/>
        <end position="476"/>
    </location>
</feature>
<feature type="domain" description="FDX-ACB" evidence="1">
    <location>
        <begin position="698"/>
        <end position="791"/>
    </location>
</feature>
<feature type="binding site" evidence="1">
    <location>
        <position position="454"/>
    </location>
    <ligand>
        <name>Mg(2+)</name>
        <dbReference type="ChEBI" id="CHEBI:18420"/>
        <note>shared with alpha subunit</note>
    </ligand>
</feature>
<feature type="binding site" evidence="1">
    <location>
        <position position="460"/>
    </location>
    <ligand>
        <name>Mg(2+)</name>
        <dbReference type="ChEBI" id="CHEBI:18420"/>
        <note>shared with alpha subunit</note>
    </ligand>
</feature>
<feature type="binding site" evidence="1">
    <location>
        <position position="463"/>
    </location>
    <ligand>
        <name>Mg(2+)</name>
        <dbReference type="ChEBI" id="CHEBI:18420"/>
        <note>shared with alpha subunit</note>
    </ligand>
</feature>
<feature type="binding site" evidence="1">
    <location>
        <position position="464"/>
    </location>
    <ligand>
        <name>Mg(2+)</name>
        <dbReference type="ChEBI" id="CHEBI:18420"/>
        <note>shared with alpha subunit</note>
    </ligand>
</feature>
<feature type="strand" evidence="2">
    <location>
        <begin position="2"/>
        <end position="4"/>
    </location>
</feature>
<feature type="helix" evidence="2">
    <location>
        <begin position="5"/>
        <end position="11"/>
    </location>
</feature>
<feature type="helix" evidence="2">
    <location>
        <begin position="18"/>
        <end position="27"/>
    </location>
</feature>
<feature type="strand" evidence="2">
    <location>
        <begin position="31"/>
        <end position="39"/>
    </location>
</feature>
<feature type="strand" evidence="2">
    <location>
        <begin position="43"/>
        <end position="55"/>
    </location>
</feature>
<feature type="strand" evidence="2">
    <location>
        <begin position="63"/>
        <end position="68"/>
    </location>
</feature>
<feature type="strand" evidence="2">
    <location>
        <begin position="73"/>
        <end position="78"/>
    </location>
</feature>
<feature type="strand" evidence="2">
    <location>
        <begin position="88"/>
        <end position="98"/>
    </location>
</feature>
<feature type="turn" evidence="2">
    <location>
        <begin position="99"/>
        <end position="101"/>
    </location>
</feature>
<feature type="strand" evidence="2">
    <location>
        <begin position="107"/>
        <end position="109"/>
    </location>
</feature>
<feature type="strand" evidence="2">
    <location>
        <begin position="112"/>
        <end position="114"/>
    </location>
</feature>
<feature type="strand" evidence="2">
    <location>
        <begin position="116"/>
        <end position="118"/>
    </location>
</feature>
<feature type="helix" evidence="2">
    <location>
        <begin position="122"/>
        <end position="124"/>
    </location>
</feature>
<feature type="helix" evidence="2">
    <location>
        <begin position="146"/>
        <end position="149"/>
    </location>
</feature>
<feature type="strand" evidence="2">
    <location>
        <begin position="155"/>
        <end position="160"/>
    </location>
</feature>
<feature type="helix" evidence="2">
    <location>
        <begin position="166"/>
        <end position="168"/>
    </location>
</feature>
<feature type="helix" evidence="2">
    <location>
        <begin position="171"/>
        <end position="182"/>
    </location>
</feature>
<feature type="strand" evidence="2">
    <location>
        <begin position="204"/>
        <end position="208"/>
    </location>
</feature>
<feature type="turn" evidence="2">
    <location>
        <begin position="209"/>
        <end position="211"/>
    </location>
</feature>
<feature type="strand" evidence="2">
    <location>
        <begin position="213"/>
        <end position="222"/>
    </location>
</feature>
<feature type="helix" evidence="2">
    <location>
        <begin position="231"/>
        <end position="238"/>
    </location>
</feature>
<feature type="turn" evidence="2">
    <location>
        <begin position="239"/>
        <end position="241"/>
    </location>
</feature>
<feature type="helix" evidence="2">
    <location>
        <begin position="247"/>
        <end position="259"/>
    </location>
</feature>
<feature type="strand" evidence="2">
    <location>
        <begin position="264"/>
        <end position="267"/>
    </location>
</feature>
<feature type="helix" evidence="2">
    <location>
        <begin position="268"/>
        <end position="270"/>
    </location>
</feature>
<feature type="strand" evidence="2">
    <location>
        <begin position="273"/>
        <end position="279"/>
    </location>
</feature>
<feature type="strand" evidence="2">
    <location>
        <begin position="285"/>
        <end position="288"/>
    </location>
</feature>
<feature type="strand" evidence="2">
    <location>
        <begin position="293"/>
        <end position="295"/>
    </location>
</feature>
<feature type="strand" evidence="2">
    <location>
        <begin position="300"/>
        <end position="304"/>
    </location>
</feature>
<feature type="strand" evidence="2">
    <location>
        <begin position="306"/>
        <end position="312"/>
    </location>
</feature>
<feature type="turn" evidence="2">
    <location>
        <begin position="313"/>
        <end position="315"/>
    </location>
</feature>
<feature type="strand" evidence="2">
    <location>
        <begin position="316"/>
        <end position="318"/>
    </location>
</feature>
<feature type="turn" evidence="2">
    <location>
        <begin position="319"/>
        <end position="321"/>
    </location>
</feature>
<feature type="strand" evidence="2">
    <location>
        <begin position="330"/>
        <end position="336"/>
    </location>
</feature>
<feature type="helix" evidence="2">
    <location>
        <begin position="339"/>
        <end position="342"/>
    </location>
</feature>
<feature type="turn" evidence="2">
    <location>
        <begin position="343"/>
        <end position="346"/>
    </location>
</feature>
<feature type="helix" evidence="2">
    <location>
        <begin position="347"/>
        <end position="349"/>
    </location>
</feature>
<feature type="helix" evidence="2">
    <location>
        <begin position="354"/>
        <end position="361"/>
    </location>
</feature>
<feature type="turn" evidence="2">
    <location>
        <begin position="365"/>
        <end position="367"/>
    </location>
</feature>
<feature type="helix" evidence="2">
    <location>
        <begin position="368"/>
        <end position="383"/>
    </location>
</feature>
<feature type="strand" evidence="2">
    <location>
        <begin position="386"/>
        <end position="394"/>
    </location>
</feature>
<feature type="helix" evidence="2">
    <location>
        <begin position="396"/>
        <end position="398"/>
    </location>
</feature>
<feature type="strand" evidence="2">
    <location>
        <begin position="405"/>
        <end position="408"/>
    </location>
</feature>
<feature type="helix" evidence="2">
    <location>
        <begin position="409"/>
        <end position="416"/>
    </location>
</feature>
<feature type="helix" evidence="2">
    <location>
        <begin position="422"/>
        <end position="431"/>
    </location>
</feature>
<feature type="strand" evidence="2">
    <location>
        <begin position="435"/>
        <end position="438"/>
    </location>
</feature>
<feature type="strand" evidence="2">
    <location>
        <begin position="443"/>
        <end position="447"/>
    </location>
</feature>
<feature type="helix" evidence="2">
    <location>
        <begin position="458"/>
        <end position="469"/>
    </location>
</feature>
<feature type="helix" evidence="2">
    <location>
        <begin position="471"/>
        <end position="473"/>
    </location>
</feature>
<feature type="strand" evidence="2">
    <location>
        <begin position="480"/>
        <end position="482"/>
    </location>
</feature>
<feature type="strand" evidence="2">
    <location>
        <begin position="490"/>
        <end position="492"/>
    </location>
</feature>
<feature type="helix" evidence="2">
    <location>
        <begin position="495"/>
        <end position="504"/>
    </location>
</feature>
<feature type="strand" evidence="2">
    <location>
        <begin position="514"/>
        <end position="516"/>
    </location>
</feature>
<feature type="helix" evidence="2">
    <location>
        <begin position="518"/>
        <end position="524"/>
    </location>
</feature>
<feature type="helix" evidence="2">
    <location>
        <begin position="539"/>
        <end position="541"/>
    </location>
</feature>
<feature type="helix" evidence="2">
    <location>
        <begin position="549"/>
        <end position="560"/>
    </location>
</feature>
<feature type="turn" evidence="2">
    <location>
        <begin position="561"/>
        <end position="563"/>
    </location>
</feature>
<feature type="strand" evidence="2">
    <location>
        <begin position="567"/>
        <end position="578"/>
    </location>
</feature>
<feature type="turn" evidence="4">
    <location>
        <begin position="580"/>
        <end position="582"/>
    </location>
</feature>
<feature type="strand" evidence="2">
    <location>
        <begin position="584"/>
        <end position="598"/>
    </location>
</feature>
<feature type="helix" evidence="2">
    <location>
        <begin position="611"/>
        <end position="622"/>
    </location>
</feature>
<feature type="turn" evidence="2">
    <location>
        <begin position="623"/>
        <end position="625"/>
    </location>
</feature>
<feature type="helix" evidence="2">
    <location>
        <begin position="628"/>
        <end position="630"/>
    </location>
</feature>
<feature type="strand" evidence="2">
    <location>
        <begin position="631"/>
        <end position="635"/>
    </location>
</feature>
<feature type="strand" evidence="2">
    <location>
        <begin position="641"/>
        <end position="651"/>
    </location>
</feature>
<feature type="strand" evidence="2">
    <location>
        <begin position="654"/>
        <end position="662"/>
    </location>
</feature>
<feature type="helix" evidence="2">
    <location>
        <begin position="664"/>
        <end position="669"/>
    </location>
</feature>
<feature type="strand" evidence="2">
    <location>
        <begin position="676"/>
        <end position="682"/>
    </location>
</feature>
<feature type="helix" evidence="2">
    <location>
        <begin position="683"/>
        <end position="685"/>
    </location>
</feature>
<feature type="strand" evidence="2">
    <location>
        <begin position="703"/>
        <end position="712"/>
    </location>
</feature>
<feature type="helix" evidence="2">
    <location>
        <begin position="717"/>
        <end position="727"/>
    </location>
</feature>
<feature type="strand" evidence="2">
    <location>
        <begin position="732"/>
        <end position="741"/>
    </location>
</feature>
<feature type="strand" evidence="3">
    <location>
        <begin position="743"/>
        <end position="746"/>
    </location>
</feature>
<feature type="strand" evidence="2">
    <location>
        <begin position="750"/>
        <end position="759"/>
    </location>
</feature>
<feature type="strand" evidence="2">
    <location>
        <begin position="762"/>
        <end position="764"/>
    </location>
</feature>
<feature type="helix" evidence="2">
    <location>
        <begin position="768"/>
        <end position="786"/>
    </location>
</feature>
<protein>
    <recommendedName>
        <fullName evidence="1">Phenylalanine--tRNA ligase beta subunit</fullName>
        <ecNumber evidence="1">6.1.1.20</ecNumber>
    </recommendedName>
    <alternativeName>
        <fullName evidence="1">Phenylalanyl-tRNA synthetase beta subunit</fullName>
        <shortName evidence="1">PheRS</shortName>
    </alternativeName>
</protein>
<accession>Q9I0A4</accession>